<evidence type="ECO:0000250" key="1">
    <source>
        <dbReference type="UniProtKB" id="Q7Z7A4"/>
    </source>
</evidence>
<evidence type="ECO:0000255" key="2">
    <source>
        <dbReference type="PROSITE-ProRule" id="PRU00147"/>
    </source>
</evidence>
<evidence type="ECO:0000255" key="3">
    <source>
        <dbReference type="PROSITE-ProRule" id="PRU00159"/>
    </source>
</evidence>
<evidence type="ECO:0000255" key="4">
    <source>
        <dbReference type="PROSITE-ProRule" id="PRU00406"/>
    </source>
</evidence>
<evidence type="ECO:0000256" key="5">
    <source>
        <dbReference type="SAM" id="MobiDB-lite"/>
    </source>
</evidence>
<evidence type="ECO:0000269" key="6">
    <source>
    </source>
</evidence>
<evidence type="ECO:0000303" key="7">
    <source>
    </source>
</evidence>
<evidence type="ECO:0000303" key="8">
    <source>
    </source>
</evidence>
<evidence type="ECO:0000305" key="9"/>
<evidence type="ECO:0000312" key="10">
    <source>
        <dbReference type="EMBL" id="AAH16131.1"/>
    </source>
</evidence>
<evidence type="ECO:0000312" key="11">
    <source>
        <dbReference type="EMBL" id="AAZ04665.1"/>
    </source>
</evidence>
<evidence type="ECO:0000312" key="12">
    <source>
        <dbReference type="EMBL" id="BAC33489.1"/>
    </source>
</evidence>
<evidence type="ECO:0000312" key="13">
    <source>
        <dbReference type="EMBL" id="BAE29537.1"/>
    </source>
</evidence>
<evidence type="ECO:0000312" key="14">
    <source>
        <dbReference type="EMBL" id="BAE34065.1"/>
    </source>
</evidence>
<evidence type="ECO:0000312" key="15">
    <source>
        <dbReference type="EMBL" id="BAE41231.1"/>
    </source>
</evidence>
<evidence type="ECO:0000312" key="16">
    <source>
        <dbReference type="EMBL" id="BAE41744.1"/>
    </source>
</evidence>
<evidence type="ECO:0000312" key="17">
    <source>
        <dbReference type="MGI" id="MGI:1289230"/>
    </source>
</evidence>
<organism>
    <name type="scientific">Mus musculus</name>
    <name type="common">Mouse</name>
    <dbReference type="NCBI Taxonomy" id="10090"/>
    <lineage>
        <taxon>Eukaryota</taxon>
        <taxon>Metazoa</taxon>
        <taxon>Chordata</taxon>
        <taxon>Craniata</taxon>
        <taxon>Vertebrata</taxon>
        <taxon>Euteleostomi</taxon>
        <taxon>Mammalia</taxon>
        <taxon>Eutheria</taxon>
        <taxon>Euarchontoglires</taxon>
        <taxon>Glires</taxon>
        <taxon>Rodentia</taxon>
        <taxon>Myomorpha</taxon>
        <taxon>Muroidea</taxon>
        <taxon>Muridae</taxon>
        <taxon>Murinae</taxon>
        <taxon>Mus</taxon>
        <taxon>Mus</taxon>
    </lineage>
</organism>
<name>PXK_MOUSE</name>
<keyword id="KW-0009">Actin-binding</keyword>
<keyword id="KW-0025">Alternative splicing</keyword>
<keyword id="KW-1003">Cell membrane</keyword>
<keyword id="KW-0963">Cytoplasm</keyword>
<keyword id="KW-0472">Membrane</keyword>
<keyword id="KW-1185">Reference proteome</keyword>
<gene>
    <name evidence="17" type="primary">Pxk</name>
</gene>
<proteinExistence type="evidence at protein level"/>
<feature type="chain" id="PRO_0000086593" description="PX domain-containing protein kinase-like protein">
    <location>
        <begin position="1"/>
        <end position="582"/>
    </location>
</feature>
<feature type="domain" description="PX" evidence="2">
    <location>
        <begin position="14"/>
        <end position="126"/>
    </location>
</feature>
<feature type="domain" description="Protein kinase" evidence="3">
    <location>
        <begin position="88"/>
        <end position="481"/>
    </location>
</feature>
<feature type="domain" description="WH2" evidence="4">
    <location>
        <begin position="548"/>
        <end position="567"/>
    </location>
</feature>
<feature type="region of interest" description="Disordered" evidence="5">
    <location>
        <begin position="433"/>
        <end position="550"/>
    </location>
</feature>
<feature type="compositionally biased region" description="Basic residues" evidence="5">
    <location>
        <begin position="437"/>
        <end position="448"/>
    </location>
</feature>
<feature type="compositionally biased region" description="Basic residues" evidence="5">
    <location>
        <begin position="457"/>
        <end position="469"/>
    </location>
</feature>
<feature type="compositionally biased region" description="Low complexity" evidence="5">
    <location>
        <begin position="483"/>
        <end position="514"/>
    </location>
</feature>
<feature type="compositionally biased region" description="Pro residues" evidence="5">
    <location>
        <begin position="515"/>
        <end position="531"/>
    </location>
</feature>
<feature type="splice variant" id="VSP_051914" description="In isoform 3." evidence="8">
    <original>VAVLESTLSCEACKNGMPTVSRLLQMPLFSDVLLTTSEKPQFKIPTKLKEALRIAKECIEKRLTEEQKQIHQHRRLTRAQS</original>
    <variation>GQYRAWQWGVLGSGSLQSCLSAYQTPRRMEGQLSCSPARALNMWMVCLSVHLSEASGETSVNCTVILKAGQWKENCGQLGF</variation>
    <location>
        <begin position="368"/>
        <end position="448"/>
    </location>
</feature>
<feature type="splice variant" id="VSP_051915" description="In isoform 3." evidence="8">
    <location>
        <begin position="449"/>
        <end position="582"/>
    </location>
</feature>
<feature type="splice variant" id="VSP_051916" description="In isoform 2." evidence="7">
    <original>GLSSAL</original>
    <variation>VEHAPL</variation>
    <location>
        <begin position="510"/>
        <end position="515"/>
    </location>
</feature>
<feature type="splice variant" id="VSP_051917" description="In isoform 2." evidence="7">
    <location>
        <begin position="516"/>
        <end position="582"/>
    </location>
</feature>
<feature type="sequence conflict" description="In Ref. 2; BAE34065." evidence="9" ref="2">
    <original>K</original>
    <variation>R</variation>
    <location>
        <position position="244"/>
    </location>
</feature>
<feature type="sequence conflict" description="In Ref. 2; BAE30914/BAE31498/BAE31693." evidence="9" ref="2">
    <original>L</original>
    <variation>P</variation>
    <location>
        <position position="306"/>
    </location>
</feature>
<feature type="sequence conflict" description="In Ref. 1; AAZ04665 and 2; BAC33489/BAE29479/BAE29537/BAE41744/BAE34065." evidence="9" ref="1 2">
    <location>
        <position position="489"/>
    </location>
</feature>
<feature type="sequence conflict" description="In Ref. 2; BAE41744." evidence="9" ref="2">
    <original>P</original>
    <variation>R</variation>
    <location>
        <position position="523"/>
    </location>
</feature>
<feature type="sequence conflict" description="In Ref. 2; BAE34065 and 3; AAH16131." evidence="9" ref="2 3">
    <original>M</original>
    <variation>T</variation>
    <location>
        <position position="539"/>
    </location>
</feature>
<feature type="sequence conflict" description="In Ref. 2; BAE29537/BAE29479." evidence="9" ref="2">
    <original>P</original>
    <variation>S</variation>
    <location>
        <position position="579"/>
    </location>
</feature>
<comment type="function">
    <text evidence="1 6">Binds to and modulates brain Na,K-ATPase subunits ATP1B1 and ATP1B3 and may thereby participate in the regulation of electrical excitability and synaptic transmission. May not display kinase activity.</text>
</comment>
<comment type="subcellular location">
    <subcellularLocation>
        <location evidence="6">Cytoplasm</location>
    </subcellularLocation>
    <subcellularLocation>
        <location evidence="6">Cell membrane</location>
        <topology evidence="6">Peripheral membrane protein</topology>
    </subcellularLocation>
    <text>Also associates with the plasma membrane.</text>
</comment>
<comment type="alternative products">
    <event type="alternative splicing"/>
    <isoform>
        <id>Q8BX57-1</id>
        <name evidence="6">1</name>
        <name evidence="7">Long</name>
        <sequence type="displayed"/>
    </isoform>
    <isoform>
        <id>Q8BX57-2</id>
        <name evidence="6">2</name>
        <name evidence="7">Short</name>
        <sequence type="described" ref="VSP_051916 VSP_051917"/>
    </isoform>
    <isoform>
        <id>Q8BX57-3</id>
        <name evidence="9">3</name>
        <sequence type="described" ref="VSP_051914 VSP_051915"/>
    </isoform>
</comment>
<comment type="tissue specificity">
    <text evidence="6">Isoform 1 is present in all tissues examined. Isoform 2 is found in all tissues except skeletal muscle and very low levels in spleen. Both isoforms are widely expressed throughout the nervous system however levels of isoform 2 are higher in purified hippocampal and cortical neurons whereas glial cells express more isoform 1 than isoform 2.</text>
</comment>
<comment type="domain">
    <text>The protein kinase domain is predicted to be catalytically inactive.</text>
</comment>
<comment type="similarity">
    <text evidence="9">Belongs to the protein kinase superfamily.</text>
</comment>
<comment type="sequence caution" evidence="9">
    <conflict type="frameshift">
        <sequence resource="EMBL-CDS" id="BAE33603"/>
    </conflict>
</comment>
<comment type="sequence caution" evidence="9">
    <conflict type="miscellaneous discrepancy">
        <sequence resource="EMBL-CDS" id="BAE33603"/>
    </conflict>
    <text>Intron retention.</text>
</comment>
<comment type="sequence caution" evidence="9">
    <conflict type="frameshift">
        <sequence resource="EMBL-CDS" id="BAE34065"/>
    </conflict>
</comment>
<dbReference type="EMBL" id="DQ095196">
    <property type="protein sequence ID" value="AAZ04664.1"/>
    <property type="molecule type" value="mRNA"/>
</dbReference>
<dbReference type="EMBL" id="DQ095197">
    <property type="protein sequence ID" value="AAZ04665.1"/>
    <property type="molecule type" value="mRNA"/>
</dbReference>
<dbReference type="EMBL" id="AK048910">
    <property type="protein sequence ID" value="BAC33489.1"/>
    <property type="molecule type" value="mRNA"/>
</dbReference>
<dbReference type="EMBL" id="AK152058">
    <property type="protein sequence ID" value="BAE30914.1"/>
    <property type="molecule type" value="mRNA"/>
</dbReference>
<dbReference type="EMBL" id="AK152789">
    <property type="protein sequence ID" value="BAE31498.1"/>
    <property type="molecule type" value="mRNA"/>
</dbReference>
<dbReference type="EMBL" id="AK153067">
    <property type="protein sequence ID" value="BAE31693.1"/>
    <property type="molecule type" value="mRNA"/>
</dbReference>
<dbReference type="EMBL" id="AK156146">
    <property type="protein sequence ID" value="BAE33603.1"/>
    <property type="status" value="ALT_FRAME"/>
    <property type="molecule type" value="mRNA"/>
</dbReference>
<dbReference type="EMBL" id="AK157364">
    <property type="protein sequence ID" value="BAE34065.1"/>
    <property type="status" value="ALT_FRAME"/>
    <property type="molecule type" value="mRNA"/>
</dbReference>
<dbReference type="EMBL" id="AK169565">
    <property type="protein sequence ID" value="BAE41231.1"/>
    <property type="molecule type" value="mRNA"/>
</dbReference>
<dbReference type="EMBL" id="AK170361">
    <property type="protein sequence ID" value="BAE41744.1"/>
    <property type="molecule type" value="mRNA"/>
</dbReference>
<dbReference type="EMBL" id="AK150413">
    <property type="protein sequence ID" value="BAE29537.1"/>
    <property type="molecule type" value="mRNA"/>
</dbReference>
<dbReference type="EMBL" id="AK150337">
    <property type="protein sequence ID" value="BAE29479.1"/>
    <property type="molecule type" value="mRNA"/>
</dbReference>
<dbReference type="EMBL" id="BC016131">
    <property type="protein sequence ID" value="AAH16131.1"/>
    <property type="molecule type" value="mRNA"/>
</dbReference>
<dbReference type="CCDS" id="CCDS26810.1">
    <molecule id="Q8BX57-1"/>
</dbReference>
<dbReference type="CCDS" id="CCDS36799.1">
    <molecule id="Q8BX57-2"/>
</dbReference>
<dbReference type="RefSeq" id="NP_001347243.1">
    <molecule id="Q8BX57-2"/>
    <property type="nucleotide sequence ID" value="NM_001360314.1"/>
</dbReference>
<dbReference type="RefSeq" id="NP_663433.2">
    <molecule id="Q8BX57-1"/>
    <property type="nucleotide sequence ID" value="NM_145458.4"/>
</dbReference>
<dbReference type="RefSeq" id="NP_840063.1">
    <molecule id="Q8BX57-2"/>
    <property type="nucleotide sequence ID" value="NM_178279.3"/>
</dbReference>
<dbReference type="RefSeq" id="XP_006518039.1">
    <property type="nucleotide sequence ID" value="XM_006517976.3"/>
</dbReference>
<dbReference type="RefSeq" id="XP_006518042.1">
    <property type="nucleotide sequence ID" value="XM_006517979.3"/>
</dbReference>
<dbReference type="SMR" id="Q8BX57"/>
<dbReference type="BioGRID" id="230057">
    <property type="interactions" value="4"/>
</dbReference>
<dbReference type="FunCoup" id="Q8BX57">
    <property type="interactions" value="3071"/>
</dbReference>
<dbReference type="IntAct" id="Q8BX57">
    <property type="interactions" value="1"/>
</dbReference>
<dbReference type="STRING" id="10090.ENSMUSP00000152987"/>
<dbReference type="GlyGen" id="Q8BX57">
    <property type="glycosylation" value="4 sites, 1 N-linked glycan (1 site), 1 O-linked glycan (1 site)"/>
</dbReference>
<dbReference type="iPTMnet" id="Q8BX57"/>
<dbReference type="PhosphoSitePlus" id="Q8BX57"/>
<dbReference type="PaxDb" id="10090-ENSMUSP00000035265"/>
<dbReference type="PeptideAtlas" id="Q8BX57"/>
<dbReference type="ProteomicsDB" id="301929">
    <molecule id="Q8BX57-1"/>
</dbReference>
<dbReference type="ProteomicsDB" id="301930">
    <molecule id="Q8BX57-2"/>
</dbReference>
<dbReference type="ProteomicsDB" id="301931">
    <molecule id="Q8BX57-3"/>
</dbReference>
<dbReference type="Pumba" id="Q8BX57"/>
<dbReference type="Antibodypedia" id="15176">
    <property type="antibodies" value="167 antibodies from 26 providers"/>
</dbReference>
<dbReference type="DNASU" id="218699"/>
<dbReference type="Ensembl" id="ENSMUST00000112689.9">
    <molecule id="Q8BX57-2"/>
    <property type="protein sequence ID" value="ENSMUSP00000108309.3"/>
    <property type="gene ID" value="ENSMUSG00000033885.16"/>
</dbReference>
<dbReference type="Ensembl" id="ENSMUST00000225653.2">
    <molecule id="Q8BX57-1"/>
    <property type="protein sequence ID" value="ENSMUSP00000152987.2"/>
    <property type="gene ID" value="ENSMUSG00000033885.16"/>
</dbReference>
<dbReference type="GeneID" id="218699"/>
<dbReference type="KEGG" id="mmu:218699"/>
<dbReference type="UCSC" id="uc007ser.2">
    <molecule id="Q8BX57-3"/>
    <property type="organism name" value="mouse"/>
</dbReference>
<dbReference type="UCSC" id="uc007ses.2">
    <molecule id="Q8BX57-2"/>
    <property type="organism name" value="mouse"/>
</dbReference>
<dbReference type="UCSC" id="uc007set.2">
    <molecule id="Q8BX57-1"/>
    <property type="organism name" value="mouse"/>
</dbReference>
<dbReference type="AGR" id="MGI:1289230"/>
<dbReference type="CTD" id="54899"/>
<dbReference type="MGI" id="MGI:1289230">
    <property type="gene designation" value="Pxk"/>
</dbReference>
<dbReference type="VEuPathDB" id="HostDB:ENSMUSG00000033885"/>
<dbReference type="eggNOG" id="KOG2101">
    <property type="taxonomic scope" value="Eukaryota"/>
</dbReference>
<dbReference type="GeneTree" id="ENSGT00390000017669"/>
<dbReference type="HOGENOM" id="CLU_036868_0_0_1"/>
<dbReference type="InParanoid" id="Q8BX57"/>
<dbReference type="OMA" id="FTQYAST"/>
<dbReference type="OrthoDB" id="41200at2759"/>
<dbReference type="PhylomeDB" id="Q8BX57"/>
<dbReference type="TreeFam" id="TF324116"/>
<dbReference type="BioGRID-ORCS" id="218699">
    <property type="hits" value="1 hit in 80 CRISPR screens"/>
</dbReference>
<dbReference type="ChiTaRS" id="Pxk">
    <property type="organism name" value="mouse"/>
</dbReference>
<dbReference type="PRO" id="PR:Q8BX57"/>
<dbReference type="Proteomes" id="UP000000589">
    <property type="component" value="Chromosome 14"/>
</dbReference>
<dbReference type="RNAct" id="Q8BX57">
    <property type="molecule type" value="protein"/>
</dbReference>
<dbReference type="Bgee" id="ENSMUSG00000033885">
    <property type="expression patterns" value="Expressed in granulocyte and 263 other cell types or tissues"/>
</dbReference>
<dbReference type="ExpressionAtlas" id="Q8BX57">
    <property type="expression patterns" value="baseline and differential"/>
</dbReference>
<dbReference type="GO" id="GO:0034451">
    <property type="term" value="C:centriolar satellite"/>
    <property type="evidence" value="ECO:0007669"/>
    <property type="project" value="Ensembl"/>
</dbReference>
<dbReference type="GO" id="GO:0005737">
    <property type="term" value="C:cytoplasm"/>
    <property type="evidence" value="ECO:0000314"/>
    <property type="project" value="UniProtKB"/>
</dbReference>
<dbReference type="GO" id="GO:0005829">
    <property type="term" value="C:cytosol"/>
    <property type="evidence" value="ECO:0007669"/>
    <property type="project" value="Ensembl"/>
</dbReference>
<dbReference type="GO" id="GO:0005886">
    <property type="term" value="C:plasma membrane"/>
    <property type="evidence" value="ECO:0000314"/>
    <property type="project" value="UniProtKB"/>
</dbReference>
<dbReference type="GO" id="GO:0032991">
    <property type="term" value="C:protein-containing complex"/>
    <property type="evidence" value="ECO:0000314"/>
    <property type="project" value="MGI"/>
</dbReference>
<dbReference type="GO" id="GO:0003779">
    <property type="term" value="F:actin binding"/>
    <property type="evidence" value="ECO:0007669"/>
    <property type="project" value="UniProtKB-KW"/>
</dbReference>
<dbReference type="GO" id="GO:0005524">
    <property type="term" value="F:ATP binding"/>
    <property type="evidence" value="ECO:0007669"/>
    <property type="project" value="InterPro"/>
</dbReference>
<dbReference type="GO" id="GO:0035091">
    <property type="term" value="F:phosphatidylinositol binding"/>
    <property type="evidence" value="ECO:0007669"/>
    <property type="project" value="InterPro"/>
</dbReference>
<dbReference type="GO" id="GO:0004672">
    <property type="term" value="F:protein kinase activity"/>
    <property type="evidence" value="ECO:0007669"/>
    <property type="project" value="InterPro"/>
</dbReference>
<dbReference type="GO" id="GO:0006954">
    <property type="term" value="P:inflammatory response"/>
    <property type="evidence" value="ECO:0007669"/>
    <property type="project" value="Ensembl"/>
</dbReference>
<dbReference type="GO" id="GO:0050804">
    <property type="term" value="P:modulation of chemical synaptic transmission"/>
    <property type="evidence" value="ECO:0000270"/>
    <property type="project" value="UniProtKB"/>
</dbReference>
<dbReference type="GO" id="GO:0032780">
    <property type="term" value="P:negative regulation of ATP-dependent activity"/>
    <property type="evidence" value="ECO:0000314"/>
    <property type="project" value="UniProtKB"/>
</dbReference>
<dbReference type="GO" id="GO:0043271">
    <property type="term" value="P:negative regulation of monoatomic ion transport"/>
    <property type="evidence" value="ECO:0000314"/>
    <property type="project" value="UniProtKB"/>
</dbReference>
<dbReference type="CDD" id="cd06871">
    <property type="entry name" value="PX_MONaKA"/>
    <property type="match status" value="1"/>
</dbReference>
<dbReference type="CDD" id="cd22062">
    <property type="entry name" value="WH2_DdVASP-like"/>
    <property type="match status" value="1"/>
</dbReference>
<dbReference type="FunFam" id="3.30.1520.10:FF:000010">
    <property type="entry name" value="PX domain-containing protein kinase-like protein isoform X6"/>
    <property type="match status" value="1"/>
</dbReference>
<dbReference type="FunFam" id="1.10.510.10:FF:000830">
    <property type="entry name" value="PX domain-containing serine/threonine kinase"/>
    <property type="match status" value="1"/>
</dbReference>
<dbReference type="Gene3D" id="3.30.200.20">
    <property type="entry name" value="Phosphorylase Kinase, domain 1"/>
    <property type="match status" value="1"/>
</dbReference>
<dbReference type="Gene3D" id="3.30.1520.10">
    <property type="entry name" value="Phox-like domain"/>
    <property type="match status" value="1"/>
</dbReference>
<dbReference type="Gene3D" id="1.10.510.10">
    <property type="entry name" value="Transferase(Phosphotransferase) domain 1"/>
    <property type="match status" value="1"/>
</dbReference>
<dbReference type="InterPro" id="IPR011009">
    <property type="entry name" value="Kinase-like_dom_sf"/>
</dbReference>
<dbReference type="InterPro" id="IPR037903">
    <property type="entry name" value="MONaKA_PX"/>
</dbReference>
<dbReference type="InterPro" id="IPR000719">
    <property type="entry name" value="Prot_kinase_dom"/>
</dbReference>
<dbReference type="InterPro" id="IPR001683">
    <property type="entry name" value="PX_dom"/>
</dbReference>
<dbReference type="InterPro" id="IPR036871">
    <property type="entry name" value="PX_dom_sf"/>
</dbReference>
<dbReference type="InterPro" id="IPR051837">
    <property type="entry name" value="SortingNexin/PXDomain-PKLike"/>
</dbReference>
<dbReference type="InterPro" id="IPR003124">
    <property type="entry name" value="WH2_dom"/>
</dbReference>
<dbReference type="PANTHER" id="PTHR22999:SF40">
    <property type="entry name" value="PX DOMAIN-CONTAINING PROTEIN KINASE-LIKE PROTEIN"/>
    <property type="match status" value="1"/>
</dbReference>
<dbReference type="PANTHER" id="PTHR22999">
    <property type="entry name" value="PX SERINE/THREONINE KINASE PXK"/>
    <property type="match status" value="1"/>
</dbReference>
<dbReference type="Pfam" id="PF00069">
    <property type="entry name" value="Pkinase"/>
    <property type="match status" value="1"/>
</dbReference>
<dbReference type="Pfam" id="PF00787">
    <property type="entry name" value="PX"/>
    <property type="match status" value="1"/>
</dbReference>
<dbReference type="Pfam" id="PF02205">
    <property type="entry name" value="WH2"/>
    <property type="match status" value="1"/>
</dbReference>
<dbReference type="SMART" id="SM00312">
    <property type="entry name" value="PX"/>
    <property type="match status" value="1"/>
</dbReference>
<dbReference type="SMART" id="SM00220">
    <property type="entry name" value="S_TKc"/>
    <property type="match status" value="1"/>
</dbReference>
<dbReference type="SUPFAM" id="SSF56112">
    <property type="entry name" value="Protein kinase-like (PK-like)"/>
    <property type="match status" value="1"/>
</dbReference>
<dbReference type="SUPFAM" id="SSF64268">
    <property type="entry name" value="PX domain"/>
    <property type="match status" value="1"/>
</dbReference>
<dbReference type="PROSITE" id="PS50011">
    <property type="entry name" value="PROTEIN_KINASE_DOM"/>
    <property type="match status" value="1"/>
</dbReference>
<dbReference type="PROSITE" id="PS50195">
    <property type="entry name" value="PX"/>
    <property type="match status" value="1"/>
</dbReference>
<dbReference type="PROSITE" id="PS51082">
    <property type="entry name" value="WH2"/>
    <property type="match status" value="1"/>
</dbReference>
<protein>
    <recommendedName>
        <fullName>PX domain-containing protein kinase-like protein</fullName>
    </recommendedName>
    <alternativeName>
        <fullName>Modulator of Na,K-ATPase</fullName>
        <shortName>MONaKA</shortName>
    </alternativeName>
</protein>
<accession>Q8BX57</accession>
<accession>Q3TD60</accession>
<accession>Q3TEL7</accession>
<accession>Q3TZZ1</accession>
<accession>Q3U197</accession>
<accession>Q3U773</accession>
<accession>Q3UCS5</accession>
<accession>Q4FBH7</accession>
<accession>Q91WB6</accession>
<sequence length="582" mass="65231">MAFMEKPPAGKVLLDDTVPLTAAVEASQSLQSHTEYIIRVQRGISAENSWQIVRRYSDFDLLNNSLQITGLSLPLPPKKLIGNMDREFIAERQRGLQNYLNVIMANHVLSNCELLKKFLDPNNYSANYTEIALQQVSMFFRSEPKWEVVEPLKDIGWRIRKKYFLMKIKNQPKERLVLSWADLGPDKYLSDKDFQCLIKLLPSCVHPYIYRVTFATASESSALLIRAFNEKGTLKDLIYKAKPKDPFLKKYCNPKKTQGLELQQIKTYGRQILEALKFLHDKGFPYGHLHAANVMLDGNTCRLLDLENSLLGLPSFYRSYFTQFRKINTLESVDVHCFGHLLYEMTYGRPPDSVPVDSFPPASSLAVVAVLESTLSCEACKNGMPTVSRLLQMPLFSDVLLTTSEKPQFKIPTKLKEALRIAKECIEKRLTEEQKQIHQHRRLTRAQSHHGSEEERKRRKILARKKSKRSAVENSEEQPVKHSNSNNSAGSGASSPLTSPSSPTPPSTAGLSSALPPPPPPPPPPPPPAGPSPTSATEMPAPFLPQPVNGVNRGALLSSIQNFQKGTLRKAQTCDHSAPKIG</sequence>
<reference evidence="9 11" key="1">
    <citation type="journal article" date="2005" name="J. Neurosci.">
        <title>MONaKA, a novel modulator of the plasma membrane Na,K-ATPase.</title>
        <authorList>
            <person name="Mao H."/>
            <person name="Ferguson T.S."/>
            <person name="Cibulsky S.M."/>
            <person name="Holmqvist M."/>
            <person name="Ding C."/>
            <person name="Fei H."/>
            <person name="Levitan I.B."/>
        </authorList>
    </citation>
    <scope>NUCLEOTIDE SEQUENCE [MRNA] (ISOFORMS 1 AND 2)</scope>
    <scope>FUNCTION</scope>
    <scope>SUBCELLULAR LOCATION</scope>
    <scope>TISSUE SPECIFICITY</scope>
    <scope>INTERACTION WITH ATP1B1 AND ATP1B3</scope>
    <source>
        <strain evidence="11">BALB/cJ</strain>
        <tissue evidence="6">Brain</tissue>
    </source>
</reference>
<reference evidence="9 15" key="2">
    <citation type="journal article" date="2005" name="Science">
        <title>The transcriptional landscape of the mammalian genome.</title>
        <authorList>
            <person name="Carninci P."/>
            <person name="Kasukawa T."/>
            <person name="Katayama S."/>
            <person name="Gough J."/>
            <person name="Frith M.C."/>
            <person name="Maeda N."/>
            <person name="Oyama R."/>
            <person name="Ravasi T."/>
            <person name="Lenhard B."/>
            <person name="Wells C."/>
            <person name="Kodzius R."/>
            <person name="Shimokawa K."/>
            <person name="Bajic V.B."/>
            <person name="Brenner S.E."/>
            <person name="Batalov S."/>
            <person name="Forrest A.R."/>
            <person name="Zavolan M."/>
            <person name="Davis M.J."/>
            <person name="Wilming L.G."/>
            <person name="Aidinis V."/>
            <person name="Allen J.E."/>
            <person name="Ambesi-Impiombato A."/>
            <person name="Apweiler R."/>
            <person name="Aturaliya R.N."/>
            <person name="Bailey T.L."/>
            <person name="Bansal M."/>
            <person name="Baxter L."/>
            <person name="Beisel K.W."/>
            <person name="Bersano T."/>
            <person name="Bono H."/>
            <person name="Chalk A.M."/>
            <person name="Chiu K.P."/>
            <person name="Choudhary V."/>
            <person name="Christoffels A."/>
            <person name="Clutterbuck D.R."/>
            <person name="Crowe M.L."/>
            <person name="Dalla E."/>
            <person name="Dalrymple B.P."/>
            <person name="de Bono B."/>
            <person name="Della Gatta G."/>
            <person name="di Bernardo D."/>
            <person name="Down T."/>
            <person name="Engstrom P."/>
            <person name="Fagiolini M."/>
            <person name="Faulkner G."/>
            <person name="Fletcher C.F."/>
            <person name="Fukushima T."/>
            <person name="Furuno M."/>
            <person name="Futaki S."/>
            <person name="Gariboldi M."/>
            <person name="Georgii-Hemming P."/>
            <person name="Gingeras T.R."/>
            <person name="Gojobori T."/>
            <person name="Green R.E."/>
            <person name="Gustincich S."/>
            <person name="Harbers M."/>
            <person name="Hayashi Y."/>
            <person name="Hensch T.K."/>
            <person name="Hirokawa N."/>
            <person name="Hill D."/>
            <person name="Huminiecki L."/>
            <person name="Iacono M."/>
            <person name="Ikeo K."/>
            <person name="Iwama A."/>
            <person name="Ishikawa T."/>
            <person name="Jakt M."/>
            <person name="Kanapin A."/>
            <person name="Katoh M."/>
            <person name="Kawasawa Y."/>
            <person name="Kelso J."/>
            <person name="Kitamura H."/>
            <person name="Kitano H."/>
            <person name="Kollias G."/>
            <person name="Krishnan S.P."/>
            <person name="Kruger A."/>
            <person name="Kummerfeld S.K."/>
            <person name="Kurochkin I.V."/>
            <person name="Lareau L.F."/>
            <person name="Lazarevic D."/>
            <person name="Lipovich L."/>
            <person name="Liu J."/>
            <person name="Liuni S."/>
            <person name="McWilliam S."/>
            <person name="Madan Babu M."/>
            <person name="Madera M."/>
            <person name="Marchionni L."/>
            <person name="Matsuda H."/>
            <person name="Matsuzawa S."/>
            <person name="Miki H."/>
            <person name="Mignone F."/>
            <person name="Miyake S."/>
            <person name="Morris K."/>
            <person name="Mottagui-Tabar S."/>
            <person name="Mulder N."/>
            <person name="Nakano N."/>
            <person name="Nakauchi H."/>
            <person name="Ng P."/>
            <person name="Nilsson R."/>
            <person name="Nishiguchi S."/>
            <person name="Nishikawa S."/>
            <person name="Nori F."/>
            <person name="Ohara O."/>
            <person name="Okazaki Y."/>
            <person name="Orlando V."/>
            <person name="Pang K.C."/>
            <person name="Pavan W.J."/>
            <person name="Pavesi G."/>
            <person name="Pesole G."/>
            <person name="Petrovsky N."/>
            <person name="Piazza S."/>
            <person name="Reed J."/>
            <person name="Reid J.F."/>
            <person name="Ring B.Z."/>
            <person name="Ringwald M."/>
            <person name="Rost B."/>
            <person name="Ruan Y."/>
            <person name="Salzberg S.L."/>
            <person name="Sandelin A."/>
            <person name="Schneider C."/>
            <person name="Schoenbach C."/>
            <person name="Sekiguchi K."/>
            <person name="Semple C.A."/>
            <person name="Seno S."/>
            <person name="Sessa L."/>
            <person name="Sheng Y."/>
            <person name="Shibata Y."/>
            <person name="Shimada H."/>
            <person name="Shimada K."/>
            <person name="Silva D."/>
            <person name="Sinclair B."/>
            <person name="Sperling S."/>
            <person name="Stupka E."/>
            <person name="Sugiura K."/>
            <person name="Sultana R."/>
            <person name="Takenaka Y."/>
            <person name="Taki K."/>
            <person name="Tammoja K."/>
            <person name="Tan S.L."/>
            <person name="Tang S."/>
            <person name="Taylor M.S."/>
            <person name="Tegner J."/>
            <person name="Teichmann S.A."/>
            <person name="Ueda H.R."/>
            <person name="van Nimwegen E."/>
            <person name="Verardo R."/>
            <person name="Wei C.L."/>
            <person name="Yagi K."/>
            <person name="Yamanishi H."/>
            <person name="Zabarovsky E."/>
            <person name="Zhu S."/>
            <person name="Zimmer A."/>
            <person name="Hide W."/>
            <person name="Bult C."/>
            <person name="Grimmond S.M."/>
            <person name="Teasdale R.D."/>
            <person name="Liu E.T."/>
            <person name="Brusic V."/>
            <person name="Quackenbush J."/>
            <person name="Wahlestedt C."/>
            <person name="Mattick J.S."/>
            <person name="Hume D.A."/>
            <person name="Kai C."/>
            <person name="Sasaki D."/>
            <person name="Tomaru Y."/>
            <person name="Fukuda S."/>
            <person name="Kanamori-Katayama M."/>
            <person name="Suzuki M."/>
            <person name="Aoki J."/>
            <person name="Arakawa T."/>
            <person name="Iida J."/>
            <person name="Imamura K."/>
            <person name="Itoh M."/>
            <person name="Kato T."/>
            <person name="Kawaji H."/>
            <person name="Kawagashira N."/>
            <person name="Kawashima T."/>
            <person name="Kojima M."/>
            <person name="Kondo S."/>
            <person name="Konno H."/>
            <person name="Nakano K."/>
            <person name="Ninomiya N."/>
            <person name="Nishio T."/>
            <person name="Okada M."/>
            <person name="Plessy C."/>
            <person name="Shibata K."/>
            <person name="Shiraki T."/>
            <person name="Suzuki S."/>
            <person name="Tagami M."/>
            <person name="Waki K."/>
            <person name="Watahiki A."/>
            <person name="Okamura-Oho Y."/>
            <person name="Suzuki H."/>
            <person name="Kawai J."/>
            <person name="Hayashizaki Y."/>
        </authorList>
    </citation>
    <scope>NUCLEOTIDE SEQUENCE [LARGE SCALE MRNA] (ISOFORMS 1 AND 3)</scope>
    <source>
        <strain evidence="12">C57BL/6J</strain>
        <strain evidence="16">NOD</strain>
        <tissue evidence="13">Bone marrow</tissue>
        <tissue evidence="12">Cerebellum</tissue>
        <tissue evidence="14">Spleen</tissue>
        <tissue evidence="15">Thymus</tissue>
    </source>
</reference>
<reference evidence="9 10" key="3">
    <citation type="journal article" date="2004" name="Genome Res.">
        <title>The status, quality, and expansion of the NIH full-length cDNA project: the Mammalian Gene Collection (MGC).</title>
        <authorList>
            <consortium name="The MGC Project Team"/>
        </authorList>
    </citation>
    <scope>NUCLEOTIDE SEQUENCE [LARGE SCALE MRNA] (ISOFORM 1)</scope>
    <source>
        <strain evidence="10">FVB/N</strain>
        <tissue evidence="10">Salivary gland</tissue>
    </source>
</reference>
<reference key="4">
    <citation type="journal article" date="2010" name="Cell">
        <title>A tissue-specific atlas of mouse protein phosphorylation and expression.</title>
        <authorList>
            <person name="Huttlin E.L."/>
            <person name="Jedrychowski M.P."/>
            <person name="Elias J.E."/>
            <person name="Goswami T."/>
            <person name="Rad R."/>
            <person name="Beausoleil S.A."/>
            <person name="Villen J."/>
            <person name="Haas W."/>
            <person name="Sowa M.E."/>
            <person name="Gygi S.P."/>
        </authorList>
    </citation>
    <scope>IDENTIFICATION BY MASS SPECTROMETRY [LARGE SCALE ANALYSIS]</scope>
    <source>
        <tissue>Brain</tissue>
        <tissue>Lung</tissue>
        <tissue>Spleen</tissue>
    </source>
</reference>